<comment type="function">
    <text evidence="1">DNA ligase that catalyzes the formation of phosphodiester linkages between 5'-phosphoryl and 3'-hydroxyl groups in double-stranded DNA using NAD as a coenzyme and as the energy source for the reaction. It is essential for DNA replication and repair of damaged DNA.</text>
</comment>
<comment type="catalytic activity">
    <reaction evidence="1">
        <text>NAD(+) + (deoxyribonucleotide)n-3'-hydroxyl + 5'-phospho-(deoxyribonucleotide)m = (deoxyribonucleotide)n+m + AMP + beta-nicotinamide D-nucleotide.</text>
        <dbReference type="EC" id="6.5.1.2"/>
    </reaction>
</comment>
<comment type="cofactor">
    <cofactor evidence="1">
        <name>Mg(2+)</name>
        <dbReference type="ChEBI" id="CHEBI:18420"/>
    </cofactor>
    <cofactor evidence="1">
        <name>Mn(2+)</name>
        <dbReference type="ChEBI" id="CHEBI:29035"/>
    </cofactor>
</comment>
<comment type="similarity">
    <text evidence="1">Belongs to the NAD-dependent DNA ligase family. LigA subfamily.</text>
</comment>
<reference key="1">
    <citation type="submission" date="2008-10" db="EMBL/GenBank/DDBJ databases">
        <title>Genome sequence of Bacillus cereus B4264.</title>
        <authorList>
            <person name="Dodson R.J."/>
            <person name="Durkin A.S."/>
            <person name="Rosovitz M.J."/>
            <person name="Rasko D.A."/>
            <person name="Hoffmaster A."/>
            <person name="Ravel J."/>
            <person name="Sutton G."/>
        </authorList>
    </citation>
    <scope>NUCLEOTIDE SEQUENCE [LARGE SCALE GENOMIC DNA]</scope>
    <source>
        <strain>B4264</strain>
    </source>
</reference>
<gene>
    <name evidence="1" type="primary">ligA</name>
    <name type="ordered locus">BCB4264_A0352</name>
</gene>
<accession>B7H4U8</accession>
<name>DNLJ_BACC4</name>
<proteinExistence type="inferred from homology"/>
<dbReference type="EC" id="6.5.1.2" evidence="1"/>
<dbReference type="EMBL" id="CP001176">
    <property type="protein sequence ID" value="ACK58736.1"/>
    <property type="molecule type" value="Genomic_DNA"/>
</dbReference>
<dbReference type="RefSeq" id="WP_000031449.1">
    <property type="nucleotide sequence ID" value="NC_011725.1"/>
</dbReference>
<dbReference type="SMR" id="B7H4U8"/>
<dbReference type="KEGG" id="bcb:BCB4264_A0352"/>
<dbReference type="HOGENOM" id="CLU_007764_2_1_9"/>
<dbReference type="Proteomes" id="UP000007096">
    <property type="component" value="Chromosome"/>
</dbReference>
<dbReference type="GO" id="GO:0005829">
    <property type="term" value="C:cytosol"/>
    <property type="evidence" value="ECO:0007669"/>
    <property type="project" value="TreeGrafter"/>
</dbReference>
<dbReference type="GO" id="GO:0003677">
    <property type="term" value="F:DNA binding"/>
    <property type="evidence" value="ECO:0007669"/>
    <property type="project" value="InterPro"/>
</dbReference>
<dbReference type="GO" id="GO:0003911">
    <property type="term" value="F:DNA ligase (NAD+) activity"/>
    <property type="evidence" value="ECO:0007669"/>
    <property type="project" value="UniProtKB-UniRule"/>
</dbReference>
<dbReference type="GO" id="GO:0046872">
    <property type="term" value="F:metal ion binding"/>
    <property type="evidence" value="ECO:0007669"/>
    <property type="project" value="UniProtKB-KW"/>
</dbReference>
<dbReference type="GO" id="GO:0006281">
    <property type="term" value="P:DNA repair"/>
    <property type="evidence" value="ECO:0007669"/>
    <property type="project" value="UniProtKB-KW"/>
</dbReference>
<dbReference type="GO" id="GO:0006260">
    <property type="term" value="P:DNA replication"/>
    <property type="evidence" value="ECO:0007669"/>
    <property type="project" value="UniProtKB-KW"/>
</dbReference>
<dbReference type="CDD" id="cd17748">
    <property type="entry name" value="BRCT_DNA_ligase_like"/>
    <property type="match status" value="1"/>
</dbReference>
<dbReference type="CDD" id="cd00114">
    <property type="entry name" value="LIGANc"/>
    <property type="match status" value="1"/>
</dbReference>
<dbReference type="FunFam" id="1.10.150.20:FF:000006">
    <property type="entry name" value="DNA ligase"/>
    <property type="match status" value="1"/>
</dbReference>
<dbReference type="FunFam" id="1.10.150.20:FF:000007">
    <property type="entry name" value="DNA ligase"/>
    <property type="match status" value="1"/>
</dbReference>
<dbReference type="FunFam" id="1.10.287.610:FF:000002">
    <property type="entry name" value="DNA ligase"/>
    <property type="match status" value="1"/>
</dbReference>
<dbReference type="FunFam" id="2.40.50.140:FF:000012">
    <property type="entry name" value="DNA ligase"/>
    <property type="match status" value="1"/>
</dbReference>
<dbReference type="FunFam" id="3.30.470.30:FF:000001">
    <property type="entry name" value="DNA ligase"/>
    <property type="match status" value="1"/>
</dbReference>
<dbReference type="FunFam" id="3.40.50.10190:FF:000026">
    <property type="entry name" value="DNA ligase"/>
    <property type="match status" value="1"/>
</dbReference>
<dbReference type="FunFam" id="6.20.10.30:FF:000002">
    <property type="entry name" value="DNA ligase"/>
    <property type="match status" value="1"/>
</dbReference>
<dbReference type="Gene3D" id="6.20.10.30">
    <property type="match status" value="1"/>
</dbReference>
<dbReference type="Gene3D" id="1.10.150.20">
    <property type="entry name" value="5' to 3' exonuclease, C-terminal subdomain"/>
    <property type="match status" value="2"/>
</dbReference>
<dbReference type="Gene3D" id="3.40.50.10190">
    <property type="entry name" value="BRCT domain"/>
    <property type="match status" value="1"/>
</dbReference>
<dbReference type="Gene3D" id="3.30.470.30">
    <property type="entry name" value="DNA ligase/mRNA capping enzyme"/>
    <property type="match status" value="1"/>
</dbReference>
<dbReference type="Gene3D" id="1.10.287.610">
    <property type="entry name" value="Helix hairpin bin"/>
    <property type="match status" value="1"/>
</dbReference>
<dbReference type="Gene3D" id="2.40.50.140">
    <property type="entry name" value="Nucleic acid-binding proteins"/>
    <property type="match status" value="1"/>
</dbReference>
<dbReference type="HAMAP" id="MF_01588">
    <property type="entry name" value="DNA_ligase_A"/>
    <property type="match status" value="1"/>
</dbReference>
<dbReference type="InterPro" id="IPR001357">
    <property type="entry name" value="BRCT_dom"/>
</dbReference>
<dbReference type="InterPro" id="IPR036420">
    <property type="entry name" value="BRCT_dom_sf"/>
</dbReference>
<dbReference type="InterPro" id="IPR041663">
    <property type="entry name" value="DisA/LigA_HHH"/>
</dbReference>
<dbReference type="InterPro" id="IPR001679">
    <property type="entry name" value="DNA_ligase"/>
</dbReference>
<dbReference type="InterPro" id="IPR018239">
    <property type="entry name" value="DNA_ligase_AS"/>
</dbReference>
<dbReference type="InterPro" id="IPR033136">
    <property type="entry name" value="DNA_ligase_CS"/>
</dbReference>
<dbReference type="InterPro" id="IPR013839">
    <property type="entry name" value="DNAligase_adenylation"/>
</dbReference>
<dbReference type="InterPro" id="IPR013840">
    <property type="entry name" value="DNAligase_N"/>
</dbReference>
<dbReference type="InterPro" id="IPR003583">
    <property type="entry name" value="Hlx-hairpin-Hlx_DNA-bd_motif"/>
</dbReference>
<dbReference type="InterPro" id="IPR012340">
    <property type="entry name" value="NA-bd_OB-fold"/>
</dbReference>
<dbReference type="InterPro" id="IPR004150">
    <property type="entry name" value="NAD_DNA_ligase_OB"/>
</dbReference>
<dbReference type="InterPro" id="IPR010994">
    <property type="entry name" value="RuvA_2-like"/>
</dbReference>
<dbReference type="InterPro" id="IPR004149">
    <property type="entry name" value="Znf_DNAligase_C4"/>
</dbReference>
<dbReference type="NCBIfam" id="TIGR00575">
    <property type="entry name" value="dnlj"/>
    <property type="match status" value="1"/>
</dbReference>
<dbReference type="NCBIfam" id="NF005932">
    <property type="entry name" value="PRK07956.1"/>
    <property type="match status" value="1"/>
</dbReference>
<dbReference type="PANTHER" id="PTHR23389">
    <property type="entry name" value="CHROMOSOME TRANSMISSION FIDELITY FACTOR 18"/>
    <property type="match status" value="1"/>
</dbReference>
<dbReference type="PANTHER" id="PTHR23389:SF9">
    <property type="entry name" value="DNA LIGASE"/>
    <property type="match status" value="1"/>
</dbReference>
<dbReference type="Pfam" id="PF00533">
    <property type="entry name" value="BRCT"/>
    <property type="match status" value="1"/>
</dbReference>
<dbReference type="Pfam" id="PF01653">
    <property type="entry name" value="DNA_ligase_aden"/>
    <property type="match status" value="1"/>
</dbReference>
<dbReference type="Pfam" id="PF03120">
    <property type="entry name" value="DNA_ligase_OB"/>
    <property type="match status" value="1"/>
</dbReference>
<dbReference type="Pfam" id="PF03119">
    <property type="entry name" value="DNA_ligase_ZBD"/>
    <property type="match status" value="1"/>
</dbReference>
<dbReference type="Pfam" id="PF12826">
    <property type="entry name" value="HHH_2"/>
    <property type="match status" value="1"/>
</dbReference>
<dbReference type="Pfam" id="PF14520">
    <property type="entry name" value="HHH_5"/>
    <property type="match status" value="1"/>
</dbReference>
<dbReference type="Pfam" id="PF22745">
    <property type="entry name" value="Nlig-Ia"/>
    <property type="match status" value="1"/>
</dbReference>
<dbReference type="PIRSF" id="PIRSF001604">
    <property type="entry name" value="LigA"/>
    <property type="match status" value="1"/>
</dbReference>
<dbReference type="SMART" id="SM00292">
    <property type="entry name" value="BRCT"/>
    <property type="match status" value="1"/>
</dbReference>
<dbReference type="SMART" id="SM00278">
    <property type="entry name" value="HhH1"/>
    <property type="match status" value="3"/>
</dbReference>
<dbReference type="SMART" id="SM00532">
    <property type="entry name" value="LIGANc"/>
    <property type="match status" value="1"/>
</dbReference>
<dbReference type="SUPFAM" id="SSF52113">
    <property type="entry name" value="BRCT domain"/>
    <property type="match status" value="1"/>
</dbReference>
<dbReference type="SUPFAM" id="SSF56091">
    <property type="entry name" value="DNA ligase/mRNA capping enzyme, catalytic domain"/>
    <property type="match status" value="1"/>
</dbReference>
<dbReference type="SUPFAM" id="SSF50249">
    <property type="entry name" value="Nucleic acid-binding proteins"/>
    <property type="match status" value="1"/>
</dbReference>
<dbReference type="SUPFAM" id="SSF47781">
    <property type="entry name" value="RuvA domain 2-like"/>
    <property type="match status" value="1"/>
</dbReference>
<dbReference type="PROSITE" id="PS50172">
    <property type="entry name" value="BRCT"/>
    <property type="match status" value="1"/>
</dbReference>
<dbReference type="PROSITE" id="PS01055">
    <property type="entry name" value="DNA_LIGASE_N1"/>
    <property type="match status" value="1"/>
</dbReference>
<dbReference type="PROSITE" id="PS01056">
    <property type="entry name" value="DNA_LIGASE_N2"/>
    <property type="match status" value="1"/>
</dbReference>
<protein>
    <recommendedName>
        <fullName evidence="1">DNA ligase</fullName>
        <ecNumber evidence="1">6.5.1.2</ecNumber>
    </recommendedName>
    <alternativeName>
        <fullName evidence="1">Polydeoxyribonucleotide synthase [NAD(+)]</fullName>
    </alternativeName>
</protein>
<feature type="chain" id="PRO_0000380302" description="DNA ligase">
    <location>
        <begin position="1"/>
        <end position="669"/>
    </location>
</feature>
<feature type="domain" description="BRCT" evidence="1">
    <location>
        <begin position="591"/>
        <end position="669"/>
    </location>
</feature>
<feature type="active site" description="N6-AMP-lysine intermediate" evidence="1">
    <location>
        <position position="116"/>
    </location>
</feature>
<feature type="binding site" evidence="1">
    <location>
        <begin position="34"/>
        <end position="38"/>
    </location>
    <ligand>
        <name>NAD(+)</name>
        <dbReference type="ChEBI" id="CHEBI:57540"/>
    </ligand>
</feature>
<feature type="binding site" evidence="1">
    <location>
        <begin position="83"/>
        <end position="84"/>
    </location>
    <ligand>
        <name>NAD(+)</name>
        <dbReference type="ChEBI" id="CHEBI:57540"/>
    </ligand>
</feature>
<feature type="binding site" evidence="1">
    <location>
        <position position="114"/>
    </location>
    <ligand>
        <name>NAD(+)</name>
        <dbReference type="ChEBI" id="CHEBI:57540"/>
    </ligand>
</feature>
<feature type="binding site" evidence="1">
    <location>
        <position position="137"/>
    </location>
    <ligand>
        <name>NAD(+)</name>
        <dbReference type="ChEBI" id="CHEBI:57540"/>
    </ligand>
</feature>
<feature type="binding site" evidence="1">
    <location>
        <position position="171"/>
    </location>
    <ligand>
        <name>NAD(+)</name>
        <dbReference type="ChEBI" id="CHEBI:57540"/>
    </ligand>
</feature>
<feature type="binding site" evidence="1">
    <location>
        <position position="287"/>
    </location>
    <ligand>
        <name>NAD(+)</name>
        <dbReference type="ChEBI" id="CHEBI:57540"/>
    </ligand>
</feature>
<feature type="binding site" evidence="1">
    <location>
        <position position="311"/>
    </location>
    <ligand>
        <name>NAD(+)</name>
        <dbReference type="ChEBI" id="CHEBI:57540"/>
    </ligand>
</feature>
<feature type="binding site" evidence="1">
    <location>
        <position position="405"/>
    </location>
    <ligand>
        <name>Zn(2+)</name>
        <dbReference type="ChEBI" id="CHEBI:29105"/>
    </ligand>
</feature>
<feature type="binding site" evidence="1">
    <location>
        <position position="408"/>
    </location>
    <ligand>
        <name>Zn(2+)</name>
        <dbReference type="ChEBI" id="CHEBI:29105"/>
    </ligand>
</feature>
<feature type="binding site" evidence="1">
    <location>
        <position position="423"/>
    </location>
    <ligand>
        <name>Zn(2+)</name>
        <dbReference type="ChEBI" id="CHEBI:29105"/>
    </ligand>
</feature>
<feature type="binding site" evidence="1">
    <location>
        <position position="428"/>
    </location>
    <ligand>
        <name>Zn(2+)</name>
        <dbReference type="ChEBI" id="CHEBI:29105"/>
    </ligand>
</feature>
<evidence type="ECO:0000255" key="1">
    <source>
        <dbReference type="HAMAP-Rule" id="MF_01588"/>
    </source>
</evidence>
<keyword id="KW-0227">DNA damage</keyword>
<keyword id="KW-0234">DNA repair</keyword>
<keyword id="KW-0235">DNA replication</keyword>
<keyword id="KW-0436">Ligase</keyword>
<keyword id="KW-0460">Magnesium</keyword>
<keyword id="KW-0464">Manganese</keyword>
<keyword id="KW-0479">Metal-binding</keyword>
<keyword id="KW-0520">NAD</keyword>
<keyword id="KW-0862">Zinc</keyword>
<organism>
    <name type="scientific">Bacillus cereus (strain B4264)</name>
    <dbReference type="NCBI Taxonomy" id="405532"/>
    <lineage>
        <taxon>Bacteria</taxon>
        <taxon>Bacillati</taxon>
        <taxon>Bacillota</taxon>
        <taxon>Bacilli</taxon>
        <taxon>Bacillales</taxon>
        <taxon>Bacillaceae</taxon>
        <taxon>Bacillus</taxon>
        <taxon>Bacillus cereus group</taxon>
    </lineage>
</organism>
<sequence length="669" mass="75226">MSKEIAKKRIEELRDLLNTFNYQYHVLDNPSVSDAEYDRNMQELIKLEAENPEFMSEDSPSVRVGGTVLDIFEKVTHKSPMLSLGNAFNEGDLRDFDRRVRQGIDGANVRYICELKIDGLAVSLHYEKGRFIQGATRGDGVTGEDITQNLKTIKAIPLRLNEEVTLEARGEAYMPKRSFVKLNEEKEQNGEDVFANPRNAAAGSIRQLDPKIAAKRNLSMFVYGLANVEEKTIPSHSESLDFLGELGFKTNPNRRTCETIEEVIAYVEEWQEKRPHLDYEIDGIVIKVDDVALQESLGTTAKSPRWAIAYKFPAEEVVTRLTGIELSVGRTGVVTPTAELEPVRVAGTIVRRASLHNEDLIREKDIRIGDYVVVKKAGDIIPEVVNVIFDKRTGEEEEYRMPTHCPACESELVRLEEEVALRCINPTCPAQIREGLIHFVSRNAMNIDGLGERVITQLFDADYIRTFADLYALTKEQLLQLERFGEKSATNLIQAIENSKENSLERLLFGLGIRHVGAKAARTFAEHFETMDELVKATEEELKAINEIGEKMAQSVVTYFDNEDVLELLQQFKEYGVNMKYKGIKIADLQNVESYFAGKTVVLTGKLEVMGRSEAKKKIEALGGKVTGSVSKSTDLVVAGEAAGSKLAQAEKHNVEVWNEERFLQELNK</sequence>